<name>ATPD_NITSB</name>
<gene>
    <name evidence="1" type="primary">atpH</name>
    <name type="ordered locus">NIS_1223</name>
</gene>
<organism>
    <name type="scientific">Nitratiruptor sp. (strain SB155-2)</name>
    <dbReference type="NCBI Taxonomy" id="387092"/>
    <lineage>
        <taxon>Bacteria</taxon>
        <taxon>Pseudomonadati</taxon>
        <taxon>Campylobacterota</taxon>
        <taxon>Epsilonproteobacteria</taxon>
        <taxon>Nautiliales</taxon>
        <taxon>Nitratiruptoraceae</taxon>
        <taxon>Nitratiruptor</taxon>
    </lineage>
</organism>
<accession>A6Q4C3</accession>
<reference key="1">
    <citation type="journal article" date="2007" name="Proc. Natl. Acad. Sci. U.S.A.">
        <title>Deep-sea vent epsilon-proteobacterial genomes provide insights into emergence of pathogens.</title>
        <authorList>
            <person name="Nakagawa S."/>
            <person name="Takaki Y."/>
            <person name="Shimamura S."/>
            <person name="Reysenbach A.-L."/>
            <person name="Takai K."/>
            <person name="Horikoshi K."/>
        </authorList>
    </citation>
    <scope>NUCLEOTIDE SEQUENCE [LARGE SCALE GENOMIC DNA]</scope>
    <source>
        <strain>SB155-2</strain>
    </source>
</reference>
<keyword id="KW-0066">ATP synthesis</keyword>
<keyword id="KW-0997">Cell inner membrane</keyword>
<keyword id="KW-1003">Cell membrane</keyword>
<keyword id="KW-0139">CF(1)</keyword>
<keyword id="KW-0375">Hydrogen ion transport</keyword>
<keyword id="KW-0406">Ion transport</keyword>
<keyword id="KW-0472">Membrane</keyword>
<keyword id="KW-1185">Reference proteome</keyword>
<keyword id="KW-0813">Transport</keyword>
<feature type="chain" id="PRO_0000382129" description="ATP synthase subunit delta">
    <location>
        <begin position="1"/>
        <end position="176"/>
    </location>
</feature>
<protein>
    <recommendedName>
        <fullName evidence="1">ATP synthase subunit delta</fullName>
    </recommendedName>
    <alternativeName>
        <fullName evidence="1">ATP synthase F(1) sector subunit delta</fullName>
    </alternativeName>
    <alternativeName>
        <fullName evidence="1">F-type ATPase subunit delta</fullName>
        <shortName evidence="1">F-ATPase subunit delta</shortName>
    </alternativeName>
</protein>
<proteinExistence type="inferred from homology"/>
<evidence type="ECO:0000255" key="1">
    <source>
        <dbReference type="HAMAP-Rule" id="MF_01416"/>
    </source>
</evidence>
<sequence>MEELIAKRYAKALMESCSEKELQAIEDALVAIAALFRDWKVKEFIISPEVEKSAKEEILLAPFKDAGKKFVHLIKLLAEKDRLEIIPALANELKIQRALKERKFDGVVYSEFKLSDNELKKIAEALSKKVNGEVVLHQGKEPYDGIKVEVNTVGIEIEFSKSKIKKQLIENILKAI</sequence>
<dbReference type="EMBL" id="AP009178">
    <property type="protein sequence ID" value="BAF70332.1"/>
    <property type="molecule type" value="Genomic_DNA"/>
</dbReference>
<dbReference type="RefSeq" id="WP_012082595.1">
    <property type="nucleotide sequence ID" value="NC_009662.1"/>
</dbReference>
<dbReference type="SMR" id="A6Q4C3"/>
<dbReference type="FunCoup" id="A6Q4C3">
    <property type="interactions" value="313"/>
</dbReference>
<dbReference type="STRING" id="387092.NIS_1223"/>
<dbReference type="KEGG" id="nis:NIS_1223"/>
<dbReference type="eggNOG" id="COG0712">
    <property type="taxonomic scope" value="Bacteria"/>
</dbReference>
<dbReference type="HOGENOM" id="CLU_085114_3_1_7"/>
<dbReference type="InParanoid" id="A6Q4C3"/>
<dbReference type="OrthoDB" id="5339308at2"/>
<dbReference type="Proteomes" id="UP000001118">
    <property type="component" value="Chromosome"/>
</dbReference>
<dbReference type="GO" id="GO:0005886">
    <property type="term" value="C:plasma membrane"/>
    <property type="evidence" value="ECO:0007669"/>
    <property type="project" value="UniProtKB-SubCell"/>
</dbReference>
<dbReference type="GO" id="GO:0045259">
    <property type="term" value="C:proton-transporting ATP synthase complex"/>
    <property type="evidence" value="ECO:0007669"/>
    <property type="project" value="UniProtKB-KW"/>
</dbReference>
<dbReference type="GO" id="GO:0046933">
    <property type="term" value="F:proton-transporting ATP synthase activity, rotational mechanism"/>
    <property type="evidence" value="ECO:0007669"/>
    <property type="project" value="UniProtKB-UniRule"/>
</dbReference>
<dbReference type="Gene3D" id="1.10.520.20">
    <property type="entry name" value="N-terminal domain of the delta subunit of the F1F0-ATP synthase"/>
    <property type="match status" value="1"/>
</dbReference>
<dbReference type="HAMAP" id="MF_01416">
    <property type="entry name" value="ATP_synth_delta_bact"/>
    <property type="match status" value="1"/>
</dbReference>
<dbReference type="InterPro" id="IPR026015">
    <property type="entry name" value="ATP_synth_OSCP/delta_N_sf"/>
</dbReference>
<dbReference type="InterPro" id="IPR000711">
    <property type="entry name" value="ATPase_OSCP/dsu"/>
</dbReference>
<dbReference type="NCBIfam" id="TIGR01145">
    <property type="entry name" value="ATP_synt_delta"/>
    <property type="match status" value="1"/>
</dbReference>
<dbReference type="NCBIfam" id="NF006291">
    <property type="entry name" value="PRK08474.1"/>
    <property type="match status" value="1"/>
</dbReference>
<dbReference type="PANTHER" id="PTHR11910">
    <property type="entry name" value="ATP SYNTHASE DELTA CHAIN"/>
    <property type="match status" value="1"/>
</dbReference>
<dbReference type="Pfam" id="PF00213">
    <property type="entry name" value="OSCP"/>
    <property type="match status" value="1"/>
</dbReference>
<dbReference type="SUPFAM" id="SSF47928">
    <property type="entry name" value="N-terminal domain of the delta subunit of the F1F0-ATP synthase"/>
    <property type="match status" value="1"/>
</dbReference>
<comment type="function">
    <text evidence="1">F(1)F(0) ATP synthase produces ATP from ADP in the presence of a proton or sodium gradient. F-type ATPases consist of two structural domains, F(1) containing the extramembraneous catalytic core and F(0) containing the membrane proton channel, linked together by a central stalk and a peripheral stalk. During catalysis, ATP synthesis in the catalytic domain of F(1) is coupled via a rotary mechanism of the central stalk subunits to proton translocation.</text>
</comment>
<comment type="function">
    <text evidence="1">This protein is part of the stalk that links CF(0) to CF(1). It either transmits conformational changes from CF(0) to CF(1) or is implicated in proton conduction.</text>
</comment>
<comment type="subunit">
    <text evidence="1">F-type ATPases have 2 components, F(1) - the catalytic core - and F(0) - the membrane proton channel. F(1) has five subunits: alpha(3), beta(3), gamma(1), delta(1), epsilon(1). F(0) has three main subunits: a(1), b(2) and c(10-14). The alpha and beta chains form an alternating ring which encloses part of the gamma chain. F(1) is attached to F(0) by a central stalk formed by the gamma and epsilon chains, while a peripheral stalk is formed by the delta and b chains.</text>
</comment>
<comment type="subcellular location">
    <subcellularLocation>
        <location evidence="1">Cell inner membrane</location>
        <topology evidence="1">Peripheral membrane protein</topology>
    </subcellularLocation>
</comment>
<comment type="similarity">
    <text evidence="1">Belongs to the ATPase delta chain family.</text>
</comment>